<reference key="1">
    <citation type="journal article" date="2002" name="Nucleic Acids Res.">
        <title>Genome sequence of Oceanobacillus iheyensis isolated from the Iheya Ridge and its unexpected adaptive capabilities to extreme environments.</title>
        <authorList>
            <person name="Takami H."/>
            <person name="Takaki Y."/>
            <person name="Uchiyama I."/>
        </authorList>
    </citation>
    <scope>NUCLEOTIDE SEQUENCE [LARGE SCALE GENOMIC DNA]</scope>
    <source>
        <strain>DSM 14371 / CIP 107618 / JCM 11309 / KCTC 3954 / HTE831</strain>
    </source>
</reference>
<comment type="catalytic activity">
    <reaction evidence="1">
        <text>tRNA(Cys) + L-cysteine + ATP = L-cysteinyl-tRNA(Cys) + AMP + diphosphate</text>
        <dbReference type="Rhea" id="RHEA:17773"/>
        <dbReference type="Rhea" id="RHEA-COMP:9661"/>
        <dbReference type="Rhea" id="RHEA-COMP:9679"/>
        <dbReference type="ChEBI" id="CHEBI:30616"/>
        <dbReference type="ChEBI" id="CHEBI:33019"/>
        <dbReference type="ChEBI" id="CHEBI:35235"/>
        <dbReference type="ChEBI" id="CHEBI:78442"/>
        <dbReference type="ChEBI" id="CHEBI:78517"/>
        <dbReference type="ChEBI" id="CHEBI:456215"/>
        <dbReference type="EC" id="6.1.1.16"/>
    </reaction>
</comment>
<comment type="cofactor">
    <cofactor evidence="1">
        <name>Zn(2+)</name>
        <dbReference type="ChEBI" id="CHEBI:29105"/>
    </cofactor>
    <text evidence="1">Binds 1 zinc ion per subunit.</text>
</comment>
<comment type="subunit">
    <text evidence="1">Monomer.</text>
</comment>
<comment type="subcellular location">
    <subcellularLocation>
        <location evidence="1">Cytoplasm</location>
    </subcellularLocation>
</comment>
<comment type="similarity">
    <text evidence="1">Belongs to the class-I aminoacyl-tRNA synthetase family.</text>
</comment>
<name>SYC_OCEIH</name>
<keyword id="KW-0030">Aminoacyl-tRNA synthetase</keyword>
<keyword id="KW-0067">ATP-binding</keyword>
<keyword id="KW-0963">Cytoplasm</keyword>
<keyword id="KW-0436">Ligase</keyword>
<keyword id="KW-0479">Metal-binding</keyword>
<keyword id="KW-0547">Nucleotide-binding</keyword>
<keyword id="KW-0597">Phosphoprotein</keyword>
<keyword id="KW-0648">Protein biosynthesis</keyword>
<keyword id="KW-1185">Reference proteome</keyword>
<keyword id="KW-0862">Zinc</keyword>
<accession>Q8ETZ9</accession>
<protein>
    <recommendedName>
        <fullName evidence="1">Cysteine--tRNA ligase</fullName>
        <ecNumber evidence="1">6.1.1.16</ecNumber>
    </recommendedName>
    <alternativeName>
        <fullName evidence="1">Cysteinyl-tRNA synthetase</fullName>
        <shortName evidence="1">CysRS</shortName>
    </alternativeName>
</protein>
<dbReference type="EC" id="6.1.1.16" evidence="1"/>
<dbReference type="EMBL" id="BA000028">
    <property type="protein sequence ID" value="BAC12055.1"/>
    <property type="molecule type" value="Genomic_DNA"/>
</dbReference>
<dbReference type="RefSeq" id="WP_011064502.1">
    <property type="nucleotide sequence ID" value="NC_004193.1"/>
</dbReference>
<dbReference type="SMR" id="Q8ETZ9"/>
<dbReference type="STRING" id="221109.gene:10732289"/>
<dbReference type="KEGG" id="oih:OB0099"/>
<dbReference type="eggNOG" id="COG0215">
    <property type="taxonomic scope" value="Bacteria"/>
</dbReference>
<dbReference type="HOGENOM" id="CLU_013528_0_1_9"/>
<dbReference type="OrthoDB" id="9815130at2"/>
<dbReference type="PhylomeDB" id="Q8ETZ9"/>
<dbReference type="Proteomes" id="UP000000822">
    <property type="component" value="Chromosome"/>
</dbReference>
<dbReference type="GO" id="GO:0005829">
    <property type="term" value="C:cytosol"/>
    <property type="evidence" value="ECO:0007669"/>
    <property type="project" value="TreeGrafter"/>
</dbReference>
<dbReference type="GO" id="GO:0005524">
    <property type="term" value="F:ATP binding"/>
    <property type="evidence" value="ECO:0007669"/>
    <property type="project" value="UniProtKB-UniRule"/>
</dbReference>
<dbReference type="GO" id="GO:0004817">
    <property type="term" value="F:cysteine-tRNA ligase activity"/>
    <property type="evidence" value="ECO:0007669"/>
    <property type="project" value="UniProtKB-UniRule"/>
</dbReference>
<dbReference type="GO" id="GO:0008270">
    <property type="term" value="F:zinc ion binding"/>
    <property type="evidence" value="ECO:0007669"/>
    <property type="project" value="UniProtKB-UniRule"/>
</dbReference>
<dbReference type="GO" id="GO:0006423">
    <property type="term" value="P:cysteinyl-tRNA aminoacylation"/>
    <property type="evidence" value="ECO:0007669"/>
    <property type="project" value="UniProtKB-UniRule"/>
</dbReference>
<dbReference type="CDD" id="cd00672">
    <property type="entry name" value="CysRS_core"/>
    <property type="match status" value="1"/>
</dbReference>
<dbReference type="FunFam" id="3.40.50.620:FF:000009">
    <property type="entry name" value="Cysteine--tRNA ligase"/>
    <property type="match status" value="1"/>
</dbReference>
<dbReference type="Gene3D" id="1.20.120.1910">
    <property type="entry name" value="Cysteine-tRNA ligase, C-terminal anti-codon recognition domain"/>
    <property type="match status" value="1"/>
</dbReference>
<dbReference type="Gene3D" id="3.40.50.620">
    <property type="entry name" value="HUPs"/>
    <property type="match status" value="1"/>
</dbReference>
<dbReference type="HAMAP" id="MF_00041">
    <property type="entry name" value="Cys_tRNA_synth"/>
    <property type="match status" value="1"/>
</dbReference>
<dbReference type="InterPro" id="IPR015803">
    <property type="entry name" value="Cys-tRNA-ligase"/>
</dbReference>
<dbReference type="InterPro" id="IPR015273">
    <property type="entry name" value="Cys-tRNA-synt_Ia_DALR"/>
</dbReference>
<dbReference type="InterPro" id="IPR024909">
    <property type="entry name" value="Cys-tRNA/MSH_ligase"/>
</dbReference>
<dbReference type="InterPro" id="IPR056411">
    <property type="entry name" value="CysS_C"/>
</dbReference>
<dbReference type="InterPro" id="IPR014729">
    <property type="entry name" value="Rossmann-like_a/b/a_fold"/>
</dbReference>
<dbReference type="InterPro" id="IPR032678">
    <property type="entry name" value="tRNA-synt_1_cat_dom"/>
</dbReference>
<dbReference type="InterPro" id="IPR009080">
    <property type="entry name" value="tRNAsynth_Ia_anticodon-bd"/>
</dbReference>
<dbReference type="NCBIfam" id="TIGR00435">
    <property type="entry name" value="cysS"/>
    <property type="match status" value="1"/>
</dbReference>
<dbReference type="PANTHER" id="PTHR10890:SF3">
    <property type="entry name" value="CYSTEINE--TRNA LIGASE, CYTOPLASMIC"/>
    <property type="match status" value="1"/>
</dbReference>
<dbReference type="PANTHER" id="PTHR10890">
    <property type="entry name" value="CYSTEINYL-TRNA SYNTHETASE"/>
    <property type="match status" value="1"/>
</dbReference>
<dbReference type="Pfam" id="PF23493">
    <property type="entry name" value="CysS_C"/>
    <property type="match status" value="1"/>
</dbReference>
<dbReference type="Pfam" id="PF09190">
    <property type="entry name" value="DALR_2"/>
    <property type="match status" value="1"/>
</dbReference>
<dbReference type="Pfam" id="PF01406">
    <property type="entry name" value="tRNA-synt_1e"/>
    <property type="match status" value="1"/>
</dbReference>
<dbReference type="PRINTS" id="PR00983">
    <property type="entry name" value="TRNASYNTHCYS"/>
</dbReference>
<dbReference type="SMART" id="SM00840">
    <property type="entry name" value="DALR_2"/>
    <property type="match status" value="1"/>
</dbReference>
<dbReference type="SUPFAM" id="SSF47323">
    <property type="entry name" value="Anticodon-binding domain of a subclass of class I aminoacyl-tRNA synthetases"/>
    <property type="match status" value="1"/>
</dbReference>
<dbReference type="SUPFAM" id="SSF52374">
    <property type="entry name" value="Nucleotidylyl transferase"/>
    <property type="match status" value="1"/>
</dbReference>
<feature type="chain" id="PRO_0000159448" description="Cysteine--tRNA ligase">
    <location>
        <begin position="1"/>
        <end position="468"/>
    </location>
</feature>
<feature type="short sequence motif" description="'HIGH' region">
    <location>
        <begin position="31"/>
        <end position="41"/>
    </location>
</feature>
<feature type="short sequence motif" description="'KMSKS' region">
    <location>
        <begin position="266"/>
        <end position="270"/>
    </location>
</feature>
<feature type="binding site" evidence="1">
    <location>
        <position position="29"/>
    </location>
    <ligand>
        <name>Zn(2+)</name>
        <dbReference type="ChEBI" id="CHEBI:29105"/>
    </ligand>
</feature>
<feature type="binding site" evidence="1">
    <location>
        <position position="209"/>
    </location>
    <ligand>
        <name>Zn(2+)</name>
        <dbReference type="ChEBI" id="CHEBI:29105"/>
    </ligand>
</feature>
<feature type="binding site" evidence="1">
    <location>
        <position position="234"/>
    </location>
    <ligand>
        <name>Zn(2+)</name>
        <dbReference type="ChEBI" id="CHEBI:29105"/>
    </ligand>
</feature>
<feature type="binding site" evidence="1">
    <location>
        <position position="238"/>
    </location>
    <ligand>
        <name>Zn(2+)</name>
        <dbReference type="ChEBI" id="CHEBI:29105"/>
    </ligand>
</feature>
<feature type="binding site" evidence="1">
    <location>
        <position position="269"/>
    </location>
    <ligand>
        <name>ATP</name>
        <dbReference type="ChEBI" id="CHEBI:30616"/>
    </ligand>
</feature>
<feature type="modified residue" description="Phosphoserine" evidence="1">
    <location>
        <position position="270"/>
    </location>
</feature>
<organism>
    <name type="scientific">Oceanobacillus iheyensis (strain DSM 14371 / CIP 107618 / JCM 11309 / KCTC 3954 / HTE831)</name>
    <dbReference type="NCBI Taxonomy" id="221109"/>
    <lineage>
        <taxon>Bacteria</taxon>
        <taxon>Bacillati</taxon>
        <taxon>Bacillota</taxon>
        <taxon>Bacilli</taxon>
        <taxon>Bacillales</taxon>
        <taxon>Bacillaceae</taxon>
        <taxon>Oceanobacillus</taxon>
    </lineage>
</organism>
<proteinExistence type="inferred from homology"/>
<gene>
    <name evidence="1" type="primary">cysS</name>
    <name type="ordered locus">OB0099</name>
</gene>
<evidence type="ECO:0000255" key="1">
    <source>
        <dbReference type="HAMAP-Rule" id="MF_00041"/>
    </source>
</evidence>
<sequence>MTIQIYNTLTRQKEIFKPLEEGKVKMYVCGPTVYNYIHIGNARPAIVFDTVRRYLEYRGFDVDYVLNFTDVDDKIIKTAKDVGEEVPVLADRFVNAYLEDVGALGVKKATKNPRVMDTMDDIIAFISALIEKGYAYEADGDVYFKPRSFDTYGKLSHQSIDELRSGARIQVGEKKEDPLDFALWKQAKDDEIAWKSPWGEGRPGWHIECSAMVKKHLGDTIDIHAGGQDLTFPHHENEIAQSEAMNGETFANYWMHNGYINIDNEKMSKSLGNFVLARDLIQAHDPRVLRFFMLSVHYRNPINFTEALLESAKTSLERIQTAYHNLSHRRDSSLNLTNDDAKWLQLVSAAMSKFEQDMDDDFNTANAISVLFDLSKEANVYLQENQTSTEVIDAFQDAISQILTVLGINILEDEETLLDETIEALIKERNEARKNRNFARADEIRDMLKEKGIVLEDTPQGVRWKRGK</sequence>